<proteinExistence type="inferred from homology"/>
<sequence>MSKQLNPAVPDQPIVLGKMGSTYGIRGWLRVFSSTENAESIFDYQPWFIQQAGKWQHVELEDWKRHSQDLIIKVKGVDDREAANLLTNCEIIVDSTQLPALEEDDYYWKDLMGCQVVTTTGYELGKIIDMMETGSNDVMVVKANLKDAFGMKERLVPFLHGQVIKKVDLTAQRVEVDWDPGF</sequence>
<comment type="function">
    <text evidence="1">An accessory protein needed during the final step in the assembly of 30S ribosomal subunit, possibly for assembly of the head region. Essential for efficient processing of 16S rRNA. May be needed both before and after RbfA during the maturation of 16S rRNA. It has affinity for free ribosomal 30S subunits but not for 70S ribosomes.</text>
</comment>
<comment type="subunit">
    <text evidence="1">Binds ribosomal protein uS19.</text>
</comment>
<comment type="subcellular location">
    <subcellularLocation>
        <location evidence="1">Cytoplasm</location>
    </subcellularLocation>
</comment>
<comment type="domain">
    <text evidence="1">The PRC barrel domain binds ribosomal protein uS19.</text>
</comment>
<comment type="similarity">
    <text evidence="1">Belongs to the RimM family.</text>
</comment>
<dbReference type="EMBL" id="CP000901">
    <property type="protein sequence ID" value="ABX87804.1"/>
    <property type="molecule type" value="Genomic_DNA"/>
</dbReference>
<dbReference type="RefSeq" id="WP_002209459.1">
    <property type="nucleotide sequence ID" value="NZ_CP009935.1"/>
</dbReference>
<dbReference type="SMR" id="A9R0U4"/>
<dbReference type="GeneID" id="57975423"/>
<dbReference type="KEGG" id="ypg:YpAngola_A0881"/>
<dbReference type="PATRIC" id="fig|349746.12.peg.1832"/>
<dbReference type="GO" id="GO:0005737">
    <property type="term" value="C:cytoplasm"/>
    <property type="evidence" value="ECO:0007669"/>
    <property type="project" value="UniProtKB-SubCell"/>
</dbReference>
<dbReference type="GO" id="GO:0005840">
    <property type="term" value="C:ribosome"/>
    <property type="evidence" value="ECO:0007669"/>
    <property type="project" value="InterPro"/>
</dbReference>
<dbReference type="GO" id="GO:0043022">
    <property type="term" value="F:ribosome binding"/>
    <property type="evidence" value="ECO:0007669"/>
    <property type="project" value="InterPro"/>
</dbReference>
<dbReference type="GO" id="GO:0042274">
    <property type="term" value="P:ribosomal small subunit biogenesis"/>
    <property type="evidence" value="ECO:0007669"/>
    <property type="project" value="UniProtKB-UniRule"/>
</dbReference>
<dbReference type="GO" id="GO:0006364">
    <property type="term" value="P:rRNA processing"/>
    <property type="evidence" value="ECO:0007669"/>
    <property type="project" value="UniProtKB-UniRule"/>
</dbReference>
<dbReference type="FunFam" id="2.30.30.240:FF:000001">
    <property type="entry name" value="Ribosome maturation factor RimM"/>
    <property type="match status" value="1"/>
</dbReference>
<dbReference type="FunFam" id="2.40.30.60:FF:000001">
    <property type="entry name" value="Ribosome maturation factor RimM"/>
    <property type="match status" value="1"/>
</dbReference>
<dbReference type="Gene3D" id="2.30.30.240">
    <property type="entry name" value="PRC-barrel domain"/>
    <property type="match status" value="1"/>
</dbReference>
<dbReference type="Gene3D" id="2.40.30.60">
    <property type="entry name" value="RimM"/>
    <property type="match status" value="1"/>
</dbReference>
<dbReference type="HAMAP" id="MF_00014">
    <property type="entry name" value="Ribosome_mat_RimM"/>
    <property type="match status" value="1"/>
</dbReference>
<dbReference type="InterPro" id="IPR011033">
    <property type="entry name" value="PRC_barrel-like_sf"/>
</dbReference>
<dbReference type="InterPro" id="IPR056792">
    <property type="entry name" value="PRC_RimM"/>
</dbReference>
<dbReference type="InterPro" id="IPR011961">
    <property type="entry name" value="RimM"/>
</dbReference>
<dbReference type="InterPro" id="IPR002676">
    <property type="entry name" value="RimM_N"/>
</dbReference>
<dbReference type="InterPro" id="IPR036976">
    <property type="entry name" value="RimM_N_sf"/>
</dbReference>
<dbReference type="InterPro" id="IPR009000">
    <property type="entry name" value="Transl_B-barrel_sf"/>
</dbReference>
<dbReference type="NCBIfam" id="TIGR02273">
    <property type="entry name" value="16S_RimM"/>
    <property type="match status" value="1"/>
</dbReference>
<dbReference type="PANTHER" id="PTHR33692">
    <property type="entry name" value="RIBOSOME MATURATION FACTOR RIMM"/>
    <property type="match status" value="1"/>
</dbReference>
<dbReference type="PANTHER" id="PTHR33692:SF1">
    <property type="entry name" value="RIBOSOME MATURATION FACTOR RIMM"/>
    <property type="match status" value="1"/>
</dbReference>
<dbReference type="Pfam" id="PF24986">
    <property type="entry name" value="PRC_RimM"/>
    <property type="match status" value="1"/>
</dbReference>
<dbReference type="Pfam" id="PF01782">
    <property type="entry name" value="RimM"/>
    <property type="match status" value="1"/>
</dbReference>
<dbReference type="SUPFAM" id="SSF50346">
    <property type="entry name" value="PRC-barrel domain"/>
    <property type="match status" value="1"/>
</dbReference>
<dbReference type="SUPFAM" id="SSF50447">
    <property type="entry name" value="Translation proteins"/>
    <property type="match status" value="1"/>
</dbReference>
<evidence type="ECO:0000255" key="1">
    <source>
        <dbReference type="HAMAP-Rule" id="MF_00014"/>
    </source>
</evidence>
<keyword id="KW-0143">Chaperone</keyword>
<keyword id="KW-0963">Cytoplasm</keyword>
<keyword id="KW-0690">Ribosome biogenesis</keyword>
<keyword id="KW-0698">rRNA processing</keyword>
<accession>A9R0U4</accession>
<gene>
    <name evidence="1" type="primary">rimM</name>
    <name type="ordered locus">YpAngola_A0881</name>
</gene>
<organism>
    <name type="scientific">Yersinia pestis bv. Antiqua (strain Angola)</name>
    <dbReference type="NCBI Taxonomy" id="349746"/>
    <lineage>
        <taxon>Bacteria</taxon>
        <taxon>Pseudomonadati</taxon>
        <taxon>Pseudomonadota</taxon>
        <taxon>Gammaproteobacteria</taxon>
        <taxon>Enterobacterales</taxon>
        <taxon>Yersiniaceae</taxon>
        <taxon>Yersinia</taxon>
    </lineage>
</organism>
<name>RIMM_YERPG</name>
<protein>
    <recommendedName>
        <fullName evidence="1">Ribosome maturation factor RimM</fullName>
    </recommendedName>
</protein>
<reference key="1">
    <citation type="journal article" date="2010" name="J. Bacteriol.">
        <title>Genome sequence of the deep-rooted Yersinia pestis strain Angola reveals new insights into the evolution and pangenome of the plague bacterium.</title>
        <authorList>
            <person name="Eppinger M."/>
            <person name="Worsham P.L."/>
            <person name="Nikolich M.P."/>
            <person name="Riley D.R."/>
            <person name="Sebastian Y."/>
            <person name="Mou S."/>
            <person name="Achtman M."/>
            <person name="Lindler L.E."/>
            <person name="Ravel J."/>
        </authorList>
    </citation>
    <scope>NUCLEOTIDE SEQUENCE [LARGE SCALE GENOMIC DNA]</scope>
    <source>
        <strain>Angola</strain>
    </source>
</reference>
<feature type="chain" id="PRO_1000089537" description="Ribosome maturation factor RimM">
    <location>
        <begin position="1"/>
        <end position="182"/>
    </location>
</feature>
<feature type="domain" description="PRC barrel" evidence="1">
    <location>
        <begin position="102"/>
        <end position="182"/>
    </location>
</feature>